<reference key="1">
    <citation type="journal article" date="2008" name="PLoS ONE">
        <title>Comparative analysis of Acinetobacters: three genomes for three lifestyles.</title>
        <authorList>
            <person name="Vallenet D."/>
            <person name="Nordmann P."/>
            <person name="Barbe V."/>
            <person name="Poirel L."/>
            <person name="Mangenot S."/>
            <person name="Bataille E."/>
            <person name="Dossat C."/>
            <person name="Gas S."/>
            <person name="Kreimeyer A."/>
            <person name="Lenoble P."/>
            <person name="Oztas S."/>
            <person name="Poulain J."/>
            <person name="Segurens B."/>
            <person name="Robert C."/>
            <person name="Abergel C."/>
            <person name="Claverie J.-M."/>
            <person name="Raoult D."/>
            <person name="Medigue C."/>
            <person name="Weissenbach J."/>
            <person name="Cruveiller S."/>
        </authorList>
    </citation>
    <scope>NUCLEOTIDE SEQUENCE [LARGE SCALE GENOMIC DNA]</scope>
    <source>
        <strain>AYE</strain>
    </source>
</reference>
<comment type="function">
    <text evidence="1">Involved in urease metallocenter assembly. Binds nickel. Probably functions as a nickel donor during metallocenter assembly.</text>
</comment>
<comment type="subcellular location">
    <subcellularLocation>
        <location evidence="1">Cytoplasm</location>
    </subcellularLocation>
</comment>
<comment type="similarity">
    <text evidence="1">Belongs to the UreE family.</text>
</comment>
<protein>
    <recommendedName>
        <fullName evidence="1">Urease accessory protein UreE</fullName>
    </recommendedName>
</protein>
<accession>B0V9P4</accession>
<name>UREE_ACIBY</name>
<keyword id="KW-0143">Chaperone</keyword>
<keyword id="KW-0963">Cytoplasm</keyword>
<keyword id="KW-0533">Nickel</keyword>
<evidence type="ECO:0000255" key="1">
    <source>
        <dbReference type="HAMAP-Rule" id="MF_00822"/>
    </source>
</evidence>
<sequence>MKIYTQRLEDISPDQAFETVELTFDTRQKSRFRAALASGVDIGADLPRTGILRSGSYIATQEGDVLRVDAKPERLMKVTAQTEFDLLKAAYHLGNRHVPLMLTPTALYFEPDHVLAEMVEGLGLTVTETDHPFEPESGAYAQHSHDHRLSPIKALHHVHS</sequence>
<proteinExistence type="inferred from homology"/>
<gene>
    <name evidence="1" type="primary">ureE</name>
    <name type="ordered locus">ABAYE2775</name>
</gene>
<feature type="chain" id="PRO_1000197430" description="Urease accessory protein UreE">
    <location>
        <begin position="1"/>
        <end position="160"/>
    </location>
</feature>
<organism>
    <name type="scientific">Acinetobacter baumannii (strain AYE)</name>
    <dbReference type="NCBI Taxonomy" id="509173"/>
    <lineage>
        <taxon>Bacteria</taxon>
        <taxon>Pseudomonadati</taxon>
        <taxon>Pseudomonadota</taxon>
        <taxon>Gammaproteobacteria</taxon>
        <taxon>Moraxellales</taxon>
        <taxon>Moraxellaceae</taxon>
        <taxon>Acinetobacter</taxon>
        <taxon>Acinetobacter calcoaceticus/baumannii complex</taxon>
    </lineage>
</organism>
<dbReference type="EMBL" id="CU459141">
    <property type="protein sequence ID" value="CAM87606.1"/>
    <property type="molecule type" value="Genomic_DNA"/>
</dbReference>
<dbReference type="RefSeq" id="WP_000708728.1">
    <property type="nucleotide sequence ID" value="NZ_JBDGFB010000015.1"/>
</dbReference>
<dbReference type="SMR" id="B0V9P4"/>
<dbReference type="EnsemblBacteria" id="CAM87606">
    <property type="protein sequence ID" value="CAM87606"/>
    <property type="gene ID" value="ABAYE2775"/>
</dbReference>
<dbReference type="GeneID" id="92892978"/>
<dbReference type="KEGG" id="aby:ABAYE2775"/>
<dbReference type="HOGENOM" id="CLU_093757_2_0_6"/>
<dbReference type="GO" id="GO:0005737">
    <property type="term" value="C:cytoplasm"/>
    <property type="evidence" value="ECO:0007669"/>
    <property type="project" value="UniProtKB-SubCell"/>
</dbReference>
<dbReference type="GO" id="GO:0016151">
    <property type="term" value="F:nickel cation binding"/>
    <property type="evidence" value="ECO:0007669"/>
    <property type="project" value="UniProtKB-UniRule"/>
</dbReference>
<dbReference type="GO" id="GO:0051082">
    <property type="term" value="F:unfolded protein binding"/>
    <property type="evidence" value="ECO:0007669"/>
    <property type="project" value="UniProtKB-UniRule"/>
</dbReference>
<dbReference type="GO" id="GO:0006457">
    <property type="term" value="P:protein folding"/>
    <property type="evidence" value="ECO:0007669"/>
    <property type="project" value="InterPro"/>
</dbReference>
<dbReference type="GO" id="GO:0065003">
    <property type="term" value="P:protein-containing complex assembly"/>
    <property type="evidence" value="ECO:0007669"/>
    <property type="project" value="InterPro"/>
</dbReference>
<dbReference type="GO" id="GO:0019627">
    <property type="term" value="P:urea metabolic process"/>
    <property type="evidence" value="ECO:0007669"/>
    <property type="project" value="InterPro"/>
</dbReference>
<dbReference type="CDD" id="cd00571">
    <property type="entry name" value="UreE"/>
    <property type="match status" value="1"/>
</dbReference>
<dbReference type="Gene3D" id="2.60.260.20">
    <property type="entry name" value="Urease metallochaperone UreE, N-terminal domain"/>
    <property type="match status" value="1"/>
</dbReference>
<dbReference type="Gene3D" id="3.30.70.790">
    <property type="entry name" value="UreE, C-terminal domain"/>
    <property type="match status" value="1"/>
</dbReference>
<dbReference type="HAMAP" id="MF_00822">
    <property type="entry name" value="UreE"/>
    <property type="match status" value="1"/>
</dbReference>
<dbReference type="InterPro" id="IPR012406">
    <property type="entry name" value="UreE"/>
</dbReference>
<dbReference type="InterPro" id="IPR007864">
    <property type="entry name" value="UreE_C_dom"/>
</dbReference>
<dbReference type="InterPro" id="IPR004029">
    <property type="entry name" value="UreE_N"/>
</dbReference>
<dbReference type="InterPro" id="IPR036118">
    <property type="entry name" value="UreE_N_sf"/>
</dbReference>
<dbReference type="NCBIfam" id="NF009751">
    <property type="entry name" value="PRK13261.1-1"/>
    <property type="match status" value="1"/>
</dbReference>
<dbReference type="Pfam" id="PF05194">
    <property type="entry name" value="UreE_C"/>
    <property type="match status" value="1"/>
</dbReference>
<dbReference type="Pfam" id="PF02814">
    <property type="entry name" value="UreE_N"/>
    <property type="match status" value="1"/>
</dbReference>
<dbReference type="PIRSF" id="PIRSF036402">
    <property type="entry name" value="Ureas_acces_UreE"/>
    <property type="match status" value="1"/>
</dbReference>
<dbReference type="SMART" id="SM00988">
    <property type="entry name" value="UreE_N"/>
    <property type="match status" value="1"/>
</dbReference>
<dbReference type="SUPFAM" id="SSF69737">
    <property type="entry name" value="Urease metallochaperone UreE, C-terminal domain"/>
    <property type="match status" value="1"/>
</dbReference>
<dbReference type="SUPFAM" id="SSF69287">
    <property type="entry name" value="Urease metallochaperone UreE, N-terminal domain"/>
    <property type="match status" value="1"/>
</dbReference>